<dbReference type="EMBL" id="BA000017">
    <property type="protein sequence ID" value="BAB58827.1"/>
    <property type="molecule type" value="Genomic_DNA"/>
</dbReference>
<dbReference type="RefSeq" id="WP_000653261.1">
    <property type="nucleotide sequence ID" value="NC_002758.2"/>
</dbReference>
<dbReference type="SMR" id="Q7A2K5"/>
<dbReference type="KEGG" id="sav:SAV2665"/>
<dbReference type="HOGENOM" id="CLU_124987_0_0_9"/>
<dbReference type="PhylomeDB" id="Q7A2K5"/>
<dbReference type="Proteomes" id="UP000002481">
    <property type="component" value="Chromosome"/>
</dbReference>
<dbReference type="GO" id="GO:0003677">
    <property type="term" value="F:DNA binding"/>
    <property type="evidence" value="ECO:0007669"/>
    <property type="project" value="UniProtKB-KW"/>
</dbReference>
<dbReference type="Gene3D" id="1.10.357.10">
    <property type="entry name" value="Tetracycline Repressor, domain 2"/>
    <property type="match status" value="1"/>
</dbReference>
<dbReference type="InterPro" id="IPR009057">
    <property type="entry name" value="Homeodomain-like_sf"/>
</dbReference>
<dbReference type="InterPro" id="IPR050624">
    <property type="entry name" value="HTH-type_Tx_Regulator"/>
</dbReference>
<dbReference type="InterPro" id="IPR001647">
    <property type="entry name" value="HTH_TetR"/>
</dbReference>
<dbReference type="InterPro" id="IPR041646">
    <property type="entry name" value="IcaR_C"/>
</dbReference>
<dbReference type="PANTHER" id="PTHR43479">
    <property type="entry name" value="ACREF/ENVCD OPERON REPRESSOR-RELATED"/>
    <property type="match status" value="1"/>
</dbReference>
<dbReference type="PANTHER" id="PTHR43479:SF11">
    <property type="entry name" value="ACREF_ENVCD OPERON REPRESSOR-RELATED"/>
    <property type="match status" value="1"/>
</dbReference>
<dbReference type="Pfam" id="PF18665">
    <property type="entry name" value="TetR_C_37"/>
    <property type="match status" value="1"/>
</dbReference>
<dbReference type="Pfam" id="PF00440">
    <property type="entry name" value="TetR_N"/>
    <property type="match status" value="1"/>
</dbReference>
<dbReference type="PRINTS" id="PR00455">
    <property type="entry name" value="HTHTETR"/>
</dbReference>
<dbReference type="SUPFAM" id="SSF46689">
    <property type="entry name" value="Homeodomain-like"/>
    <property type="match status" value="1"/>
</dbReference>
<dbReference type="PROSITE" id="PS50977">
    <property type="entry name" value="HTH_TETR_2"/>
    <property type="match status" value="1"/>
</dbReference>
<evidence type="ECO:0000250" key="1"/>
<evidence type="ECO:0000255" key="2">
    <source>
        <dbReference type="PROSITE-ProRule" id="PRU00335"/>
    </source>
</evidence>
<name>ICAR_STAAM</name>
<gene>
    <name type="primary">icaR</name>
    <name type="ordered locus">SAV2665</name>
</gene>
<comment type="function">
    <text evidence="1">Represses transcription of the icaADBC operon necessary for biofilm production.</text>
</comment>
<comment type="subunit">
    <text evidence="1">Homodimer.</text>
</comment>
<comment type="miscellaneous">
    <text evidence="1">Binding to the ica operator DNA involves two IcaR dimers and is highly cooperative.</text>
</comment>
<organism>
    <name type="scientific">Staphylococcus aureus (strain Mu50 / ATCC 700699)</name>
    <dbReference type="NCBI Taxonomy" id="158878"/>
    <lineage>
        <taxon>Bacteria</taxon>
        <taxon>Bacillati</taxon>
        <taxon>Bacillota</taxon>
        <taxon>Bacilli</taxon>
        <taxon>Bacillales</taxon>
        <taxon>Staphylococcaceae</taxon>
        <taxon>Staphylococcus</taxon>
    </lineage>
</organism>
<reference key="1">
    <citation type="journal article" date="2001" name="Lancet">
        <title>Whole genome sequencing of meticillin-resistant Staphylococcus aureus.</title>
        <authorList>
            <person name="Kuroda M."/>
            <person name="Ohta T."/>
            <person name="Uchiyama I."/>
            <person name="Baba T."/>
            <person name="Yuzawa H."/>
            <person name="Kobayashi I."/>
            <person name="Cui L."/>
            <person name="Oguchi A."/>
            <person name="Aoki K."/>
            <person name="Nagai Y."/>
            <person name="Lian J.-Q."/>
            <person name="Ito T."/>
            <person name="Kanamori M."/>
            <person name="Matsumaru H."/>
            <person name="Maruyama A."/>
            <person name="Murakami H."/>
            <person name="Hosoyama A."/>
            <person name="Mizutani-Ui Y."/>
            <person name="Takahashi N.K."/>
            <person name="Sawano T."/>
            <person name="Inoue R."/>
            <person name="Kaito C."/>
            <person name="Sekimizu K."/>
            <person name="Hirakawa H."/>
            <person name="Kuhara S."/>
            <person name="Goto S."/>
            <person name="Yabuzaki J."/>
            <person name="Kanehisa M."/>
            <person name="Yamashita A."/>
            <person name="Oshima K."/>
            <person name="Furuya K."/>
            <person name="Yoshino C."/>
            <person name="Shiba T."/>
            <person name="Hattori M."/>
            <person name="Ogasawara N."/>
            <person name="Hayashi H."/>
            <person name="Hiramatsu K."/>
        </authorList>
    </citation>
    <scope>NUCLEOTIDE SEQUENCE [LARGE SCALE GENOMIC DNA]</scope>
    <source>
        <strain>Mu50 / ATCC 700699</strain>
    </source>
</reference>
<feature type="chain" id="PRO_0000070598" description="Biofilm operon icaADBC HTH-type negative transcriptional regulator IcaR">
    <location>
        <begin position="1"/>
        <end position="186"/>
    </location>
</feature>
<feature type="domain" description="HTH tetR-type" evidence="2">
    <location>
        <begin position="1"/>
        <end position="59"/>
    </location>
</feature>
<feature type="DNA-binding region" description="H-T-H motif" evidence="2">
    <location>
        <begin position="22"/>
        <end position="41"/>
    </location>
</feature>
<keyword id="KW-0238">DNA-binding</keyword>
<keyword id="KW-0678">Repressor</keyword>
<keyword id="KW-0804">Transcription</keyword>
<keyword id="KW-0805">Transcription regulation</keyword>
<protein>
    <recommendedName>
        <fullName>Biofilm operon icaADBC HTH-type negative transcriptional regulator IcaR</fullName>
    </recommendedName>
    <alternativeName>
        <fullName>Intercellular adhesion protein R</fullName>
    </alternativeName>
</protein>
<sequence>MKDKIIDNAITLFSEKGYDGTTLDDIAKSVNIKKASLYYHFDSKKSIYEQSVKCCFDYLNNIIMMNQNKSNYSIDALYQFLFEFIFDIEERYIRMYVQLSNTPEEFSGNIYGQIQDLNQSLSKEIAKFYDESKIKMTKEDFQNLILLFLESWYLKASFSQKFGAVEESKSQFKDEVYSLLNIFLKK</sequence>
<proteinExistence type="inferred from homology"/>
<accession>Q7A2K5</accession>